<dbReference type="SMR" id="P83574"/>
<dbReference type="iPTMnet" id="P83574"/>
<dbReference type="GO" id="GO:0019028">
    <property type="term" value="C:viral capsid"/>
    <property type="evidence" value="ECO:0007669"/>
    <property type="project" value="UniProtKB-KW"/>
</dbReference>
<dbReference type="InterPro" id="IPR001592">
    <property type="entry name" value="Poty_coat"/>
</dbReference>
<dbReference type="Pfam" id="PF00767">
    <property type="entry name" value="Poty_coat"/>
    <property type="match status" value="1"/>
</dbReference>
<accession>P83574</accession>
<organismHost>
    <name type="scientific">Sorghum bicolor</name>
    <name type="common">Sorghum</name>
    <name type="synonym">Sorghum vulgare</name>
    <dbReference type="NCBI Taxonomy" id="4558"/>
</organismHost>
<protein>
    <recommendedName>
        <fullName>Genome polyprotein</fullName>
    </recommendedName>
    <component>
        <recommendedName>
            <fullName>Capsid protein</fullName>
            <shortName>CP</shortName>
        </recommendedName>
        <alternativeName>
            <fullName>Coat protein</fullName>
        </alternativeName>
    </component>
</protein>
<evidence type="ECO:0000250" key="1"/>
<evidence type="ECO:0000250" key="2">
    <source>
        <dbReference type="UniProtKB" id="P04517"/>
    </source>
</evidence>
<evidence type="ECO:0000256" key="3">
    <source>
        <dbReference type="SAM" id="MobiDB-lite"/>
    </source>
</evidence>
<evidence type="ECO:0000269" key="4">
    <source>
    </source>
</evidence>
<evidence type="ECO:0000305" key="5"/>
<name>POLG_NIGSP</name>
<keyword id="KW-0007">Acetylation</keyword>
<keyword id="KW-0167">Capsid protein</keyword>
<keyword id="KW-0903">Direct protein sequencing</keyword>
<keyword id="KW-0946">Virion</keyword>
<sequence length="293" mass="32856">SGNEDAGNVKPAAGTKENKSDKEKDKPESGNAANAKATSNTKEDGGESGTKPTTANKDKDVDVGSTGTFVIPKLKKVSPKMRLPMVSNKAILNLDHLIQYKPDQRDISNARATHTQFQFWYNRIKKEYDVDDEQMRILMNGLMVWCIENGTSPDINGYWTMVDGNNQSEFPLKPIVENAKPTLRQCMMHFSDAAEAYIEMRNLDEPYMPRYGLLRNLNDKSLARYAFDFYEINSRTPNRAREAHAQMKAAAIRGSTNHMFGLDGNVGESSENTERHTAADVSRNVHTYRGAKI</sequence>
<reference key="1">
    <citation type="journal article" date="2005" name="Arch. Virol.">
        <title>Characterization of a distinct Johnsongrass mosaic virus strain isolated from sorghum in Nigeria.</title>
        <authorList>
            <person name="Seifers D.L."/>
            <person name="Haber S."/>
            <person name="Ens W."/>
            <person name="She Y.M."/>
            <person name="Standing K.G."/>
            <person name="Salomon R."/>
        </authorList>
    </citation>
    <scope>PROTEIN SEQUENCE</scope>
    <scope>ACETYLATION AT SER-1</scope>
</reference>
<reference key="2">
    <citation type="journal article" date="2001" name="Virus Res.">
        <title>Potyvirus proteins: a wealth of functions.</title>
        <authorList>
            <person name="Urcuqui-Inchima S."/>
            <person name="Haenni A.L."/>
            <person name="Bernardi F."/>
        </authorList>
    </citation>
    <scope>REVIEW</scope>
</reference>
<feature type="chain" id="PRO_0000040460" description="Capsid protein">
    <location>
        <begin position="1"/>
        <end position="293"/>
    </location>
</feature>
<feature type="region of interest" description="Disordered" evidence="3">
    <location>
        <begin position="1"/>
        <end position="64"/>
    </location>
</feature>
<feature type="compositionally biased region" description="Basic and acidic residues" evidence="3">
    <location>
        <begin position="16"/>
        <end position="28"/>
    </location>
</feature>
<feature type="compositionally biased region" description="Low complexity" evidence="3">
    <location>
        <begin position="31"/>
        <end position="40"/>
    </location>
</feature>
<feature type="modified residue" description="N-acetylserine; by host" evidence="4">
    <location>
        <position position="1"/>
    </location>
</feature>
<feature type="non-terminal residue">
    <location>
        <position position="1"/>
    </location>
</feature>
<proteinExistence type="evidence at protein level"/>
<organism evidence="5">
    <name type="scientific">Nigerian sorghum potyvirus</name>
    <name type="common">Dawa mosaic virus</name>
    <dbReference type="NCBI Taxonomy" id="228731"/>
    <lineage>
        <taxon>Viruses</taxon>
        <taxon>Riboviria</taxon>
        <taxon>Orthornavirae</taxon>
        <taxon>Pisuviricota</taxon>
        <taxon>Stelpaviricetes</taxon>
        <taxon>Patatavirales</taxon>
        <taxon>Potyviridae</taxon>
        <taxon>Potyvirus</taxon>
        <taxon>Potyvirus halapensis</taxon>
        <taxon>Johnsongrass mosaic virus</taxon>
    </lineage>
</organism>
<comment type="function">
    <molecule>Capsid protein</molecule>
    <text evidence="2">Involved in aphid transmission, cell-to-cell and systemis movement, encapsidation of the viral RNA and in the regulation of viral RNA amplification.</text>
</comment>
<comment type="subcellular location">
    <molecule>Capsid protein</molecule>
    <subcellularLocation>
        <location evidence="5">Virion</location>
    </subcellularLocation>
</comment>
<comment type="PTM">
    <text evidence="1">Genome polyprotein of potyviruses undergoes post-translational proteolytic processing by the main proteinase NIa-pro resulting in the production of at least ten individual proteins. The P1 proteinase and the HC-pro cleave only their respective C-termini autocatalytically. 6K1 is essential for proper proteolytic separation of P3 from CI (By similarity).</text>
</comment>
<comment type="similarity">
    <text evidence="5">Belongs to the potyviridae genome polyprotein family.</text>
</comment>